<accession>A1A8Z3</accession>
<proteinExistence type="inferred from homology"/>
<evidence type="ECO:0000255" key="1">
    <source>
        <dbReference type="HAMAP-Rule" id="MF_00567"/>
    </source>
</evidence>
<feature type="chain" id="PRO_1000024953" description="Quinolinate synthase">
    <location>
        <begin position="1"/>
        <end position="347"/>
    </location>
</feature>
<feature type="binding site" evidence="1">
    <location>
        <position position="47"/>
    </location>
    <ligand>
        <name>iminosuccinate</name>
        <dbReference type="ChEBI" id="CHEBI:77875"/>
    </ligand>
</feature>
<feature type="binding site" evidence="1">
    <location>
        <position position="68"/>
    </location>
    <ligand>
        <name>iminosuccinate</name>
        <dbReference type="ChEBI" id="CHEBI:77875"/>
    </ligand>
</feature>
<feature type="binding site" evidence="1">
    <location>
        <position position="113"/>
    </location>
    <ligand>
        <name>[4Fe-4S] cluster</name>
        <dbReference type="ChEBI" id="CHEBI:49883"/>
    </ligand>
</feature>
<feature type="binding site" evidence="1">
    <location>
        <begin position="139"/>
        <end position="141"/>
    </location>
    <ligand>
        <name>iminosuccinate</name>
        <dbReference type="ChEBI" id="CHEBI:77875"/>
    </ligand>
</feature>
<feature type="binding site" evidence="1">
    <location>
        <position position="156"/>
    </location>
    <ligand>
        <name>iminosuccinate</name>
        <dbReference type="ChEBI" id="CHEBI:77875"/>
    </ligand>
</feature>
<feature type="binding site" evidence="1">
    <location>
        <position position="200"/>
    </location>
    <ligand>
        <name>[4Fe-4S] cluster</name>
        <dbReference type="ChEBI" id="CHEBI:49883"/>
    </ligand>
</feature>
<feature type="binding site" evidence="1">
    <location>
        <begin position="226"/>
        <end position="228"/>
    </location>
    <ligand>
        <name>iminosuccinate</name>
        <dbReference type="ChEBI" id="CHEBI:77875"/>
    </ligand>
</feature>
<feature type="binding site" evidence="1">
    <location>
        <position position="243"/>
    </location>
    <ligand>
        <name>iminosuccinate</name>
        <dbReference type="ChEBI" id="CHEBI:77875"/>
    </ligand>
</feature>
<feature type="binding site" evidence="1">
    <location>
        <position position="297"/>
    </location>
    <ligand>
        <name>[4Fe-4S] cluster</name>
        <dbReference type="ChEBI" id="CHEBI:49883"/>
    </ligand>
</feature>
<name>NADA_ECOK1</name>
<sequence length="347" mass="38184">MSVMFDPDTAIYPFPPKPTPLSIDEKAYYREKIKRLLKERNAVMVAHYYTDPEIQQLAEETGGCISDSLEMARFGAKHPASTLLVAGVRFMGETAKILSPEKTILMPTLQAECSLDLGCPVEEFNAFCDAHPDRTVVVYANTSAAVKARADWVVTSSIAVELIDHLDSLGEKIIWAPDKHLGCYVQKQTGADILCWQGACIVHDEFKTQALTRLQEEYPDAAILVHPESPQAIVEMADAVGSTSQLIAAAKTLPHQRLIVATDRGIFYKMQQAVPDKELLEAPTAGEGATCRSCAHCPWMAMNGLQAIAEALELEGSNHEVYVDERLLERALVPLNRMLDFAATLRG</sequence>
<gene>
    <name evidence="1" type="primary">nadA</name>
    <name type="ordered locus">Ecok1_06390</name>
    <name type="ORF">APECO1_1338</name>
</gene>
<keyword id="KW-0004">4Fe-4S</keyword>
<keyword id="KW-0963">Cytoplasm</keyword>
<keyword id="KW-0408">Iron</keyword>
<keyword id="KW-0411">Iron-sulfur</keyword>
<keyword id="KW-0479">Metal-binding</keyword>
<keyword id="KW-0662">Pyridine nucleotide biosynthesis</keyword>
<keyword id="KW-1185">Reference proteome</keyword>
<keyword id="KW-0808">Transferase</keyword>
<reference key="1">
    <citation type="journal article" date="2007" name="J. Bacteriol.">
        <title>The genome sequence of avian pathogenic Escherichia coli strain O1:K1:H7 shares strong similarities with human extraintestinal pathogenic E. coli genomes.</title>
        <authorList>
            <person name="Johnson T.J."/>
            <person name="Kariyawasam S."/>
            <person name="Wannemuehler Y."/>
            <person name="Mangiamele P."/>
            <person name="Johnson S.J."/>
            <person name="Doetkott C."/>
            <person name="Skyberg J.A."/>
            <person name="Lynne A.M."/>
            <person name="Johnson J.R."/>
            <person name="Nolan L.K."/>
        </authorList>
    </citation>
    <scope>NUCLEOTIDE SEQUENCE [LARGE SCALE GENOMIC DNA]</scope>
</reference>
<organism>
    <name type="scientific">Escherichia coli O1:K1 / APEC</name>
    <dbReference type="NCBI Taxonomy" id="405955"/>
    <lineage>
        <taxon>Bacteria</taxon>
        <taxon>Pseudomonadati</taxon>
        <taxon>Pseudomonadota</taxon>
        <taxon>Gammaproteobacteria</taxon>
        <taxon>Enterobacterales</taxon>
        <taxon>Enterobacteriaceae</taxon>
        <taxon>Escherichia</taxon>
    </lineage>
</organism>
<dbReference type="EC" id="2.5.1.72" evidence="1"/>
<dbReference type="EMBL" id="CP000468">
    <property type="protein sequence ID" value="ABJ00133.1"/>
    <property type="molecule type" value="Genomic_DNA"/>
</dbReference>
<dbReference type="RefSeq" id="WP_000115276.1">
    <property type="nucleotide sequence ID" value="NZ_CADILS010000026.1"/>
</dbReference>
<dbReference type="SMR" id="A1A8Z3"/>
<dbReference type="KEGG" id="ecv:APECO1_1338"/>
<dbReference type="HOGENOM" id="CLU_047382_1_0_6"/>
<dbReference type="UniPathway" id="UPA00253">
    <property type="reaction ID" value="UER00327"/>
</dbReference>
<dbReference type="Proteomes" id="UP000008216">
    <property type="component" value="Chromosome"/>
</dbReference>
<dbReference type="GO" id="GO:0005829">
    <property type="term" value="C:cytosol"/>
    <property type="evidence" value="ECO:0007669"/>
    <property type="project" value="TreeGrafter"/>
</dbReference>
<dbReference type="GO" id="GO:0051539">
    <property type="term" value="F:4 iron, 4 sulfur cluster binding"/>
    <property type="evidence" value="ECO:0007669"/>
    <property type="project" value="UniProtKB-KW"/>
</dbReference>
<dbReference type="GO" id="GO:0046872">
    <property type="term" value="F:metal ion binding"/>
    <property type="evidence" value="ECO:0007669"/>
    <property type="project" value="UniProtKB-KW"/>
</dbReference>
<dbReference type="GO" id="GO:0008987">
    <property type="term" value="F:quinolinate synthetase A activity"/>
    <property type="evidence" value="ECO:0007669"/>
    <property type="project" value="UniProtKB-UniRule"/>
</dbReference>
<dbReference type="GO" id="GO:0034628">
    <property type="term" value="P:'de novo' NAD biosynthetic process from L-aspartate"/>
    <property type="evidence" value="ECO:0007669"/>
    <property type="project" value="TreeGrafter"/>
</dbReference>
<dbReference type="FunFam" id="3.40.50.10800:FF:000001">
    <property type="entry name" value="Quinolinate synthase A"/>
    <property type="match status" value="1"/>
</dbReference>
<dbReference type="FunFam" id="3.40.50.10800:FF:000003">
    <property type="entry name" value="Quinolinate synthase A"/>
    <property type="match status" value="1"/>
</dbReference>
<dbReference type="Gene3D" id="3.40.50.10800">
    <property type="entry name" value="NadA-like"/>
    <property type="match status" value="3"/>
</dbReference>
<dbReference type="HAMAP" id="MF_00567">
    <property type="entry name" value="NadA_type1"/>
    <property type="match status" value="1"/>
</dbReference>
<dbReference type="InterPro" id="IPR003473">
    <property type="entry name" value="NadA"/>
</dbReference>
<dbReference type="InterPro" id="IPR036094">
    <property type="entry name" value="NadA_sf"/>
</dbReference>
<dbReference type="InterPro" id="IPR023513">
    <property type="entry name" value="Quinolinate_synth_A_type1"/>
</dbReference>
<dbReference type="NCBIfam" id="TIGR00550">
    <property type="entry name" value="nadA"/>
    <property type="match status" value="1"/>
</dbReference>
<dbReference type="NCBIfam" id="NF006877">
    <property type="entry name" value="PRK09375.1-1"/>
    <property type="match status" value="1"/>
</dbReference>
<dbReference type="NCBIfam" id="NF006878">
    <property type="entry name" value="PRK09375.1-2"/>
    <property type="match status" value="1"/>
</dbReference>
<dbReference type="PANTHER" id="PTHR30573:SF0">
    <property type="entry name" value="QUINOLINATE SYNTHASE, CHLOROPLASTIC"/>
    <property type="match status" value="1"/>
</dbReference>
<dbReference type="PANTHER" id="PTHR30573">
    <property type="entry name" value="QUINOLINATE SYNTHETASE A"/>
    <property type="match status" value="1"/>
</dbReference>
<dbReference type="Pfam" id="PF02445">
    <property type="entry name" value="NadA"/>
    <property type="match status" value="1"/>
</dbReference>
<dbReference type="SUPFAM" id="SSF142754">
    <property type="entry name" value="NadA-like"/>
    <property type="match status" value="1"/>
</dbReference>
<comment type="function">
    <text evidence="1">Catalyzes the condensation of iminoaspartate with dihydroxyacetone phosphate to form quinolinate.</text>
</comment>
<comment type="catalytic activity">
    <reaction evidence="1">
        <text>iminosuccinate + dihydroxyacetone phosphate = quinolinate + phosphate + 2 H2O + H(+)</text>
        <dbReference type="Rhea" id="RHEA:25888"/>
        <dbReference type="ChEBI" id="CHEBI:15377"/>
        <dbReference type="ChEBI" id="CHEBI:15378"/>
        <dbReference type="ChEBI" id="CHEBI:29959"/>
        <dbReference type="ChEBI" id="CHEBI:43474"/>
        <dbReference type="ChEBI" id="CHEBI:57642"/>
        <dbReference type="ChEBI" id="CHEBI:77875"/>
        <dbReference type="EC" id="2.5.1.72"/>
    </reaction>
    <physiologicalReaction direction="left-to-right" evidence="1">
        <dbReference type="Rhea" id="RHEA:25889"/>
    </physiologicalReaction>
</comment>
<comment type="cofactor">
    <cofactor evidence="1">
        <name>[4Fe-4S] cluster</name>
        <dbReference type="ChEBI" id="CHEBI:49883"/>
    </cofactor>
    <text evidence="1">Binds 1 [4Fe-4S] cluster per subunit.</text>
</comment>
<comment type="pathway">
    <text evidence="1">Cofactor biosynthesis; NAD(+) biosynthesis; quinolinate from iminoaspartate: step 1/1.</text>
</comment>
<comment type="subcellular location">
    <subcellularLocation>
        <location evidence="1">Cytoplasm</location>
    </subcellularLocation>
</comment>
<comment type="similarity">
    <text evidence="1">Belongs to the quinolinate synthase family. Type 1 subfamily.</text>
</comment>
<protein>
    <recommendedName>
        <fullName evidence="1">Quinolinate synthase</fullName>
        <ecNumber evidence="1">2.5.1.72</ecNumber>
    </recommendedName>
</protein>